<protein>
    <recommendedName>
        <fullName evidence="1">Flagellar hook-basal body complex protein FliE</fullName>
    </recommendedName>
</protein>
<keyword id="KW-0975">Bacterial flagellum</keyword>
<dbReference type="EMBL" id="CU928162">
    <property type="protein sequence ID" value="CAR08392.2"/>
    <property type="molecule type" value="Genomic_DNA"/>
</dbReference>
<dbReference type="RefSeq" id="WP_001274295.1">
    <property type="nucleotide sequence ID" value="NC_011745.1"/>
</dbReference>
<dbReference type="SMR" id="B7MWC6"/>
<dbReference type="GeneID" id="75205822"/>
<dbReference type="KEGG" id="ecq:ECED1_2204"/>
<dbReference type="HOGENOM" id="CLU_147249_0_2_6"/>
<dbReference type="Proteomes" id="UP000000748">
    <property type="component" value="Chromosome"/>
</dbReference>
<dbReference type="GO" id="GO:0009425">
    <property type="term" value="C:bacterial-type flagellum basal body"/>
    <property type="evidence" value="ECO:0007669"/>
    <property type="project" value="UniProtKB-SubCell"/>
</dbReference>
<dbReference type="GO" id="GO:0003774">
    <property type="term" value="F:cytoskeletal motor activity"/>
    <property type="evidence" value="ECO:0007669"/>
    <property type="project" value="InterPro"/>
</dbReference>
<dbReference type="GO" id="GO:0005198">
    <property type="term" value="F:structural molecule activity"/>
    <property type="evidence" value="ECO:0007669"/>
    <property type="project" value="InterPro"/>
</dbReference>
<dbReference type="GO" id="GO:0071973">
    <property type="term" value="P:bacterial-type flagellum-dependent cell motility"/>
    <property type="evidence" value="ECO:0007669"/>
    <property type="project" value="InterPro"/>
</dbReference>
<dbReference type="HAMAP" id="MF_00724">
    <property type="entry name" value="FliE"/>
    <property type="match status" value="1"/>
</dbReference>
<dbReference type="InterPro" id="IPR001624">
    <property type="entry name" value="FliE"/>
</dbReference>
<dbReference type="NCBIfam" id="TIGR00205">
    <property type="entry name" value="fliE"/>
    <property type="match status" value="1"/>
</dbReference>
<dbReference type="PANTHER" id="PTHR34653">
    <property type="match status" value="1"/>
</dbReference>
<dbReference type="PANTHER" id="PTHR34653:SF1">
    <property type="entry name" value="FLAGELLAR HOOK-BASAL BODY COMPLEX PROTEIN FLIE"/>
    <property type="match status" value="1"/>
</dbReference>
<dbReference type="Pfam" id="PF02049">
    <property type="entry name" value="FliE"/>
    <property type="match status" value="1"/>
</dbReference>
<dbReference type="PRINTS" id="PR01006">
    <property type="entry name" value="FLGHOOKFLIE"/>
</dbReference>
<sequence length="104" mass="11113">MSAIQGIEGVISQLQATAMSARAQDSLPQPTISFAGQLHAALDRISDTQTAARTQAEKFTLGEPGVALNDVMTDMQKASVSMQMGIQVRNKLVAAYQEVMSMQV</sequence>
<name>FLIE_ECO81</name>
<reference key="1">
    <citation type="journal article" date="2009" name="PLoS Genet.">
        <title>Organised genome dynamics in the Escherichia coli species results in highly diverse adaptive paths.</title>
        <authorList>
            <person name="Touchon M."/>
            <person name="Hoede C."/>
            <person name="Tenaillon O."/>
            <person name="Barbe V."/>
            <person name="Baeriswyl S."/>
            <person name="Bidet P."/>
            <person name="Bingen E."/>
            <person name="Bonacorsi S."/>
            <person name="Bouchier C."/>
            <person name="Bouvet O."/>
            <person name="Calteau A."/>
            <person name="Chiapello H."/>
            <person name="Clermont O."/>
            <person name="Cruveiller S."/>
            <person name="Danchin A."/>
            <person name="Diard M."/>
            <person name="Dossat C."/>
            <person name="Karoui M.E."/>
            <person name="Frapy E."/>
            <person name="Garry L."/>
            <person name="Ghigo J.M."/>
            <person name="Gilles A.M."/>
            <person name="Johnson J."/>
            <person name="Le Bouguenec C."/>
            <person name="Lescat M."/>
            <person name="Mangenot S."/>
            <person name="Martinez-Jehanne V."/>
            <person name="Matic I."/>
            <person name="Nassif X."/>
            <person name="Oztas S."/>
            <person name="Petit M.A."/>
            <person name="Pichon C."/>
            <person name="Rouy Z."/>
            <person name="Ruf C.S."/>
            <person name="Schneider D."/>
            <person name="Tourret J."/>
            <person name="Vacherie B."/>
            <person name="Vallenet D."/>
            <person name="Medigue C."/>
            <person name="Rocha E.P.C."/>
            <person name="Denamur E."/>
        </authorList>
    </citation>
    <scope>NUCLEOTIDE SEQUENCE [LARGE SCALE GENOMIC DNA]</scope>
    <source>
        <strain>ED1a</strain>
    </source>
</reference>
<comment type="subcellular location">
    <subcellularLocation>
        <location evidence="1">Bacterial flagellum basal body</location>
    </subcellularLocation>
</comment>
<comment type="similarity">
    <text evidence="1">Belongs to the FliE family.</text>
</comment>
<gene>
    <name evidence="1" type="primary">fliE</name>
    <name type="ordered locus">ECED1_2204</name>
</gene>
<evidence type="ECO:0000255" key="1">
    <source>
        <dbReference type="HAMAP-Rule" id="MF_00724"/>
    </source>
</evidence>
<feature type="chain" id="PRO_1000148051" description="Flagellar hook-basal body complex protein FliE">
    <location>
        <begin position="1"/>
        <end position="104"/>
    </location>
</feature>
<accession>B7MWC6</accession>
<organism>
    <name type="scientific">Escherichia coli O81 (strain ED1a)</name>
    <dbReference type="NCBI Taxonomy" id="585397"/>
    <lineage>
        <taxon>Bacteria</taxon>
        <taxon>Pseudomonadati</taxon>
        <taxon>Pseudomonadota</taxon>
        <taxon>Gammaproteobacteria</taxon>
        <taxon>Enterobacterales</taxon>
        <taxon>Enterobacteriaceae</taxon>
        <taxon>Escherichia</taxon>
    </lineage>
</organism>
<proteinExistence type="inferred from homology"/>